<comment type="function">
    <text evidence="1">Quinone reductase that provides resistance to thiol-specific stress caused by electrophilic quinones.</text>
</comment>
<comment type="function">
    <text evidence="1">Also exhibits azoreductase activity. Catalyzes the reductive cleavage of the azo bond in aromatic azo compounds to the corresponding amines.</text>
</comment>
<comment type="catalytic activity">
    <reaction evidence="1">
        <text>2 a quinone + NADH + H(+) = 2 a 1,4-benzosemiquinone + NAD(+)</text>
        <dbReference type="Rhea" id="RHEA:65952"/>
        <dbReference type="ChEBI" id="CHEBI:15378"/>
        <dbReference type="ChEBI" id="CHEBI:57540"/>
        <dbReference type="ChEBI" id="CHEBI:57945"/>
        <dbReference type="ChEBI" id="CHEBI:132124"/>
        <dbReference type="ChEBI" id="CHEBI:134225"/>
    </reaction>
</comment>
<comment type="catalytic activity">
    <reaction evidence="1">
        <text>N,N-dimethyl-1,4-phenylenediamine + anthranilate + 2 NAD(+) = 2-(4-dimethylaminophenyl)diazenylbenzoate + 2 NADH + 2 H(+)</text>
        <dbReference type="Rhea" id="RHEA:55872"/>
        <dbReference type="ChEBI" id="CHEBI:15378"/>
        <dbReference type="ChEBI" id="CHEBI:15783"/>
        <dbReference type="ChEBI" id="CHEBI:16567"/>
        <dbReference type="ChEBI" id="CHEBI:57540"/>
        <dbReference type="ChEBI" id="CHEBI:57945"/>
        <dbReference type="ChEBI" id="CHEBI:71579"/>
        <dbReference type="EC" id="1.7.1.17"/>
    </reaction>
</comment>
<comment type="cofactor">
    <cofactor evidence="1">
        <name>FMN</name>
        <dbReference type="ChEBI" id="CHEBI:58210"/>
    </cofactor>
    <text evidence="1">Binds 1 FMN per subunit.</text>
</comment>
<comment type="subunit">
    <text evidence="1">Homodimer.</text>
</comment>
<comment type="similarity">
    <text evidence="1">Belongs to the azoreductase type 1 family.</text>
</comment>
<evidence type="ECO:0000255" key="1">
    <source>
        <dbReference type="HAMAP-Rule" id="MF_01216"/>
    </source>
</evidence>
<protein>
    <recommendedName>
        <fullName evidence="1">FMN-dependent NADH:quinone oxidoreductase</fullName>
        <ecNumber evidence="1">1.6.5.-</ecNumber>
    </recommendedName>
    <alternativeName>
        <fullName evidence="1">Azo-dye reductase</fullName>
    </alternativeName>
    <alternativeName>
        <fullName evidence="1">FMN-dependent NADH-azo compound oxidoreductase</fullName>
    </alternativeName>
    <alternativeName>
        <fullName evidence="1">FMN-dependent NADH-azoreductase</fullName>
        <ecNumber evidence="1">1.7.1.17</ecNumber>
    </alternativeName>
</protein>
<accession>A6WI50</accession>
<organism>
    <name type="scientific">Shewanella baltica (strain OS185)</name>
    <dbReference type="NCBI Taxonomy" id="402882"/>
    <lineage>
        <taxon>Bacteria</taxon>
        <taxon>Pseudomonadati</taxon>
        <taxon>Pseudomonadota</taxon>
        <taxon>Gammaproteobacteria</taxon>
        <taxon>Alteromonadales</taxon>
        <taxon>Shewanellaceae</taxon>
        <taxon>Shewanella</taxon>
    </lineage>
</organism>
<keyword id="KW-0285">Flavoprotein</keyword>
<keyword id="KW-0288">FMN</keyword>
<keyword id="KW-0520">NAD</keyword>
<keyword id="KW-0560">Oxidoreductase</keyword>
<name>AZOR_SHEB8</name>
<reference key="1">
    <citation type="submission" date="2007-07" db="EMBL/GenBank/DDBJ databases">
        <title>Complete sequence of chromosome of Shewanella baltica OS185.</title>
        <authorList>
            <consortium name="US DOE Joint Genome Institute"/>
            <person name="Copeland A."/>
            <person name="Lucas S."/>
            <person name="Lapidus A."/>
            <person name="Barry K."/>
            <person name="Glavina del Rio T."/>
            <person name="Dalin E."/>
            <person name="Tice H."/>
            <person name="Pitluck S."/>
            <person name="Sims D."/>
            <person name="Brettin T."/>
            <person name="Bruce D."/>
            <person name="Detter J.C."/>
            <person name="Han C."/>
            <person name="Schmutz J."/>
            <person name="Larimer F."/>
            <person name="Land M."/>
            <person name="Hauser L."/>
            <person name="Kyrpides N."/>
            <person name="Mikhailova N."/>
            <person name="Brettar I."/>
            <person name="Rodrigues J."/>
            <person name="Konstantinidis K."/>
            <person name="Tiedje J."/>
            <person name="Richardson P."/>
        </authorList>
    </citation>
    <scope>NUCLEOTIDE SEQUENCE [LARGE SCALE GENOMIC DNA]</scope>
    <source>
        <strain>OS185</strain>
    </source>
</reference>
<sequence length="198" mass="21111">MSKVLILKSSILGGYSQSAVLIDHLASHWETQGAAITVRDLGGKDVLPMVDGEIASGLRGGAELSVRQQEMLALSDTLVAELKANDTIVIAAPMYNFTIPAQLKNWIDFIARAGVTFTYTETGPKGLVEGKRAVLVTTRGGAHKDGPTDHVVPYLKTVLGFIGITNVEVVYAEALNMGPEAHDKGMSEAKHSIDQLKA</sequence>
<proteinExistence type="inferred from homology"/>
<dbReference type="EC" id="1.6.5.-" evidence="1"/>
<dbReference type="EC" id="1.7.1.17" evidence="1"/>
<dbReference type="EMBL" id="CP000753">
    <property type="protein sequence ID" value="ABS06489.1"/>
    <property type="molecule type" value="Genomic_DNA"/>
</dbReference>
<dbReference type="RefSeq" id="WP_011982177.1">
    <property type="nucleotide sequence ID" value="NC_009665.1"/>
</dbReference>
<dbReference type="SMR" id="A6WI50"/>
<dbReference type="KEGG" id="sbm:Shew185_0319"/>
<dbReference type="HOGENOM" id="CLU_088964_0_0_6"/>
<dbReference type="GO" id="GO:0009055">
    <property type="term" value="F:electron transfer activity"/>
    <property type="evidence" value="ECO:0007669"/>
    <property type="project" value="UniProtKB-UniRule"/>
</dbReference>
<dbReference type="GO" id="GO:0010181">
    <property type="term" value="F:FMN binding"/>
    <property type="evidence" value="ECO:0007669"/>
    <property type="project" value="UniProtKB-UniRule"/>
</dbReference>
<dbReference type="GO" id="GO:0016652">
    <property type="term" value="F:oxidoreductase activity, acting on NAD(P)H as acceptor"/>
    <property type="evidence" value="ECO:0007669"/>
    <property type="project" value="UniProtKB-UniRule"/>
</dbReference>
<dbReference type="GO" id="GO:0016655">
    <property type="term" value="F:oxidoreductase activity, acting on NAD(P)H, quinone or similar compound as acceptor"/>
    <property type="evidence" value="ECO:0007669"/>
    <property type="project" value="InterPro"/>
</dbReference>
<dbReference type="Gene3D" id="3.40.50.360">
    <property type="match status" value="1"/>
</dbReference>
<dbReference type="HAMAP" id="MF_01216">
    <property type="entry name" value="Azoreductase_type1"/>
    <property type="match status" value="1"/>
</dbReference>
<dbReference type="InterPro" id="IPR003680">
    <property type="entry name" value="Flavodoxin_fold"/>
</dbReference>
<dbReference type="InterPro" id="IPR029039">
    <property type="entry name" value="Flavoprotein-like_sf"/>
</dbReference>
<dbReference type="InterPro" id="IPR050104">
    <property type="entry name" value="FMN-dep_NADH:Q_OxRdtase_AzoR1"/>
</dbReference>
<dbReference type="InterPro" id="IPR023048">
    <property type="entry name" value="NADH:quinone_OxRdtase_FMN_depd"/>
</dbReference>
<dbReference type="PANTHER" id="PTHR43741">
    <property type="entry name" value="FMN-DEPENDENT NADH-AZOREDUCTASE 1"/>
    <property type="match status" value="1"/>
</dbReference>
<dbReference type="PANTHER" id="PTHR43741:SF2">
    <property type="entry name" value="FMN-DEPENDENT NADH:QUINONE OXIDOREDUCTASE"/>
    <property type="match status" value="1"/>
</dbReference>
<dbReference type="Pfam" id="PF02525">
    <property type="entry name" value="Flavodoxin_2"/>
    <property type="match status" value="1"/>
</dbReference>
<dbReference type="SUPFAM" id="SSF52218">
    <property type="entry name" value="Flavoproteins"/>
    <property type="match status" value="1"/>
</dbReference>
<feature type="chain" id="PRO_1000066521" description="FMN-dependent NADH:quinone oxidoreductase">
    <location>
        <begin position="1"/>
        <end position="198"/>
    </location>
</feature>
<feature type="binding site" evidence="1">
    <location>
        <position position="10"/>
    </location>
    <ligand>
        <name>FMN</name>
        <dbReference type="ChEBI" id="CHEBI:58210"/>
    </ligand>
</feature>
<feature type="binding site" evidence="1">
    <location>
        <begin position="16"/>
        <end position="18"/>
    </location>
    <ligand>
        <name>FMN</name>
        <dbReference type="ChEBI" id="CHEBI:58210"/>
    </ligand>
</feature>
<feature type="binding site" evidence="1">
    <location>
        <begin position="94"/>
        <end position="97"/>
    </location>
    <ligand>
        <name>FMN</name>
        <dbReference type="ChEBI" id="CHEBI:58210"/>
    </ligand>
</feature>
<feature type="binding site" evidence="1">
    <location>
        <begin position="138"/>
        <end position="141"/>
    </location>
    <ligand>
        <name>FMN</name>
        <dbReference type="ChEBI" id="CHEBI:58210"/>
    </ligand>
</feature>
<gene>
    <name evidence="1" type="primary">azoR</name>
    <name type="ordered locus">Shew185_0319</name>
</gene>